<organism>
    <name type="scientific">Streptococcus pneumoniae (strain JJA)</name>
    <dbReference type="NCBI Taxonomy" id="488222"/>
    <lineage>
        <taxon>Bacteria</taxon>
        <taxon>Bacillati</taxon>
        <taxon>Bacillota</taxon>
        <taxon>Bacilli</taxon>
        <taxon>Lactobacillales</taxon>
        <taxon>Streptococcaceae</taxon>
        <taxon>Streptococcus</taxon>
    </lineage>
</organism>
<reference key="1">
    <citation type="journal article" date="2010" name="Genome Biol.">
        <title>Structure and dynamics of the pan-genome of Streptococcus pneumoniae and closely related species.</title>
        <authorList>
            <person name="Donati C."/>
            <person name="Hiller N.L."/>
            <person name="Tettelin H."/>
            <person name="Muzzi A."/>
            <person name="Croucher N.J."/>
            <person name="Angiuoli S.V."/>
            <person name="Oggioni M."/>
            <person name="Dunning Hotopp J.C."/>
            <person name="Hu F.Z."/>
            <person name="Riley D.R."/>
            <person name="Covacci A."/>
            <person name="Mitchell T.J."/>
            <person name="Bentley S.D."/>
            <person name="Kilian M."/>
            <person name="Ehrlich G.D."/>
            <person name="Rappuoli R."/>
            <person name="Moxon E.R."/>
            <person name="Masignani V."/>
        </authorList>
    </citation>
    <scope>NUCLEOTIDE SEQUENCE [LARGE SCALE GENOMIC DNA]</scope>
    <source>
        <strain>JJA</strain>
    </source>
</reference>
<gene>
    <name type="ordered locus">SPJ_0886</name>
</gene>
<feature type="chain" id="PRO_1000185209" description="UPF0346 protein SPJ_0886">
    <location>
        <begin position="1"/>
        <end position="71"/>
    </location>
</feature>
<sequence length="71" mass="8419">MRKSFYTWLMTERNPKSNSPKAILADLAFEEAAFPKHTDDFDEVSRFLEEHASFSFNLGDFDAIWQEYLEH</sequence>
<comment type="similarity">
    <text evidence="1">Belongs to the UPF0346 family.</text>
</comment>
<accession>C1CDU3</accession>
<dbReference type="EMBL" id="CP000919">
    <property type="protein sequence ID" value="ACO20092.1"/>
    <property type="molecule type" value="Genomic_DNA"/>
</dbReference>
<dbReference type="RefSeq" id="WP_001232081.1">
    <property type="nucleotide sequence ID" value="NC_012466.1"/>
</dbReference>
<dbReference type="SMR" id="C1CDU3"/>
<dbReference type="KEGG" id="sjj:SPJ_0886"/>
<dbReference type="HOGENOM" id="CLU_177534_1_0_9"/>
<dbReference type="Proteomes" id="UP000002206">
    <property type="component" value="Chromosome"/>
</dbReference>
<dbReference type="Gene3D" id="1.10.150.260">
    <property type="entry name" value="YozE SAM-like"/>
    <property type="match status" value="1"/>
</dbReference>
<dbReference type="HAMAP" id="MF_01538">
    <property type="entry name" value="UPF0346"/>
    <property type="match status" value="1"/>
</dbReference>
<dbReference type="InterPro" id="IPR010673">
    <property type="entry name" value="UPF0346"/>
</dbReference>
<dbReference type="InterPro" id="IPR023089">
    <property type="entry name" value="YozE_SAM-like"/>
</dbReference>
<dbReference type="InterPro" id="IPR036806">
    <property type="entry name" value="YozE_SAM-like_sf"/>
</dbReference>
<dbReference type="NCBIfam" id="NF010193">
    <property type="entry name" value="PRK13672.1"/>
    <property type="match status" value="1"/>
</dbReference>
<dbReference type="Pfam" id="PF06855">
    <property type="entry name" value="YozE_SAM_like"/>
    <property type="match status" value="1"/>
</dbReference>
<dbReference type="PIRSF" id="PIRSF037262">
    <property type="entry name" value="UCP037262"/>
    <property type="match status" value="1"/>
</dbReference>
<dbReference type="SUPFAM" id="SSF140652">
    <property type="entry name" value="YozE-like"/>
    <property type="match status" value="1"/>
</dbReference>
<proteinExistence type="inferred from homology"/>
<name>Y886_STRZJ</name>
<evidence type="ECO:0000255" key="1">
    <source>
        <dbReference type="HAMAP-Rule" id="MF_01538"/>
    </source>
</evidence>
<protein>
    <recommendedName>
        <fullName evidence="1">UPF0346 protein SPJ_0886</fullName>
    </recommendedName>
</protein>